<dbReference type="EMBL" id="AADN02025986">
    <property type="status" value="NOT_ANNOTATED_CDS"/>
    <property type="molecule type" value="Genomic_DNA"/>
</dbReference>
<dbReference type="PIR" id="A03044">
    <property type="entry name" value="MOCHBC"/>
</dbReference>
<dbReference type="SMR" id="P02611"/>
<dbReference type="FunCoup" id="P02611">
    <property type="interactions" value="230"/>
</dbReference>
<dbReference type="STRING" id="9031.ENSGALP00000051468"/>
<dbReference type="PaxDb" id="9031-ENSGALP00000002761"/>
<dbReference type="VEuPathDB" id="HostDB:geneid_417506"/>
<dbReference type="eggNOG" id="KOG0031">
    <property type="taxonomic scope" value="Eukaryota"/>
</dbReference>
<dbReference type="InParanoid" id="P02611"/>
<dbReference type="Proteomes" id="UP000000539">
    <property type="component" value="Unassembled WGS sequence"/>
</dbReference>
<dbReference type="GO" id="GO:0005737">
    <property type="term" value="C:cytoplasm"/>
    <property type="evidence" value="ECO:0000318"/>
    <property type="project" value="GO_Central"/>
</dbReference>
<dbReference type="GO" id="GO:0005739">
    <property type="term" value="C:mitochondrion"/>
    <property type="evidence" value="ECO:0000318"/>
    <property type="project" value="GO_Central"/>
</dbReference>
<dbReference type="GO" id="GO:0016459">
    <property type="term" value="C:myosin complex"/>
    <property type="evidence" value="ECO:0007669"/>
    <property type="project" value="UniProtKB-KW"/>
</dbReference>
<dbReference type="GO" id="GO:0005509">
    <property type="term" value="F:calcium ion binding"/>
    <property type="evidence" value="ECO:0000318"/>
    <property type="project" value="GO_Central"/>
</dbReference>
<dbReference type="FunFam" id="1.10.238.10:FF:000010">
    <property type="entry name" value="Myosin regulatory light chain 2, atrial isoform"/>
    <property type="match status" value="1"/>
</dbReference>
<dbReference type="FunFam" id="1.10.238.10:FF:000007">
    <property type="entry name" value="Putative myosin regulatory light chain sqh"/>
    <property type="match status" value="1"/>
</dbReference>
<dbReference type="Gene3D" id="1.10.238.10">
    <property type="entry name" value="EF-hand"/>
    <property type="match status" value="2"/>
</dbReference>
<dbReference type="InterPro" id="IPR011992">
    <property type="entry name" value="EF-hand-dom_pair"/>
</dbReference>
<dbReference type="InterPro" id="IPR018247">
    <property type="entry name" value="EF_Hand_1_Ca_BS"/>
</dbReference>
<dbReference type="InterPro" id="IPR002048">
    <property type="entry name" value="EF_hand_dom"/>
</dbReference>
<dbReference type="InterPro" id="IPR050403">
    <property type="entry name" value="Myosin_RLC"/>
</dbReference>
<dbReference type="PANTHER" id="PTHR23049">
    <property type="entry name" value="MYOSIN REGULATORY LIGHT CHAIN 2"/>
    <property type="match status" value="1"/>
</dbReference>
<dbReference type="Pfam" id="PF13405">
    <property type="entry name" value="EF-hand_6"/>
    <property type="match status" value="1"/>
</dbReference>
<dbReference type="SMART" id="SM00054">
    <property type="entry name" value="EFh"/>
    <property type="match status" value="3"/>
</dbReference>
<dbReference type="SUPFAM" id="SSF47473">
    <property type="entry name" value="EF-hand"/>
    <property type="match status" value="1"/>
</dbReference>
<dbReference type="PROSITE" id="PS00018">
    <property type="entry name" value="EF_HAND_1"/>
    <property type="match status" value="1"/>
</dbReference>
<dbReference type="PROSITE" id="PS50222">
    <property type="entry name" value="EF_HAND_2"/>
    <property type="match status" value="3"/>
</dbReference>
<accession>P02611</accession>
<sequence>MAPKKAKKKVEGGSNVFSMFEQTQIQEFKEAFTIMDQNRDGFIDKADLRDTFAALGRLNVKNEELEDMVKEAPGPINFTVFLTMFGEKLKGTDPEETILNAFKIFDPEGKGHIKADYIKEMLMTQEGRFSQEEINQMFAAFPPDVSGNLDYKNLCYVITHGEEKD</sequence>
<keyword id="KW-0106">Calcium</keyword>
<keyword id="KW-0903">Direct protein sequencing</keyword>
<keyword id="KW-0479">Metal-binding</keyword>
<keyword id="KW-0488">Methylation</keyword>
<keyword id="KW-0505">Motor protein</keyword>
<keyword id="KW-0514">Muscle protein</keyword>
<keyword id="KW-0518">Myosin</keyword>
<keyword id="KW-1185">Reference proteome</keyword>
<keyword id="KW-0677">Repeat</keyword>
<reference key="1">
    <citation type="journal article" date="2004" name="Nature">
        <title>Sequence and comparative analysis of the chicken genome provide unique perspectives on vertebrate evolution.</title>
        <authorList>
            <person name="Hillier L.W."/>
            <person name="Miller W."/>
            <person name="Birney E."/>
            <person name="Warren W."/>
            <person name="Hardison R.C."/>
            <person name="Ponting C.P."/>
            <person name="Bork P."/>
            <person name="Burt D.W."/>
            <person name="Groenen M.A.M."/>
            <person name="Delany M.E."/>
            <person name="Dodgson J.B."/>
            <person name="Chinwalla A.T."/>
            <person name="Cliften P.F."/>
            <person name="Clifton S.W."/>
            <person name="Delehaunty K.D."/>
            <person name="Fronick C."/>
            <person name="Fulton R.S."/>
            <person name="Graves T.A."/>
            <person name="Kremitzki C."/>
            <person name="Layman D."/>
            <person name="Magrini V."/>
            <person name="McPherson J.D."/>
            <person name="Miner T.L."/>
            <person name="Minx P."/>
            <person name="Nash W.E."/>
            <person name="Nhan M.N."/>
            <person name="Nelson J.O."/>
            <person name="Oddy L.G."/>
            <person name="Pohl C.S."/>
            <person name="Randall-Maher J."/>
            <person name="Smith S.M."/>
            <person name="Wallis J.W."/>
            <person name="Yang S.-P."/>
            <person name="Romanov M.N."/>
            <person name="Rondelli C.M."/>
            <person name="Paton B."/>
            <person name="Smith J."/>
            <person name="Morrice D."/>
            <person name="Daniels L."/>
            <person name="Tempest H.G."/>
            <person name="Robertson L."/>
            <person name="Masabanda J.S."/>
            <person name="Griffin D.K."/>
            <person name="Vignal A."/>
            <person name="Fillon V."/>
            <person name="Jacobbson L."/>
            <person name="Kerje S."/>
            <person name="Andersson L."/>
            <person name="Crooijmans R.P."/>
            <person name="Aerts J."/>
            <person name="van der Poel J.J."/>
            <person name="Ellegren H."/>
            <person name="Caldwell R.B."/>
            <person name="Hubbard S.J."/>
            <person name="Grafham D.V."/>
            <person name="Kierzek A.M."/>
            <person name="McLaren S.R."/>
            <person name="Overton I.M."/>
            <person name="Arakawa H."/>
            <person name="Beattie K.J."/>
            <person name="Bezzubov Y."/>
            <person name="Boardman P.E."/>
            <person name="Bonfield J.K."/>
            <person name="Croning M.D.R."/>
            <person name="Davies R.M."/>
            <person name="Francis M.D."/>
            <person name="Humphray S.J."/>
            <person name="Scott C.E."/>
            <person name="Taylor R.G."/>
            <person name="Tickle C."/>
            <person name="Brown W.R.A."/>
            <person name="Rogers J."/>
            <person name="Buerstedde J.-M."/>
            <person name="Wilson S.A."/>
            <person name="Stubbs L."/>
            <person name="Ovcharenko I."/>
            <person name="Gordon L."/>
            <person name="Lucas S."/>
            <person name="Miller M.M."/>
            <person name="Inoko H."/>
            <person name="Shiina T."/>
            <person name="Kaufman J."/>
            <person name="Salomonsen J."/>
            <person name="Skjoedt K."/>
            <person name="Wong G.K.-S."/>
            <person name="Wang J."/>
            <person name="Liu B."/>
            <person name="Wang J."/>
            <person name="Yu J."/>
            <person name="Yang H."/>
            <person name="Nefedov M."/>
            <person name="Koriabine M."/>
            <person name="Dejong P.J."/>
            <person name="Goodstadt L."/>
            <person name="Webber C."/>
            <person name="Dickens N.J."/>
            <person name="Letunic I."/>
            <person name="Suyama M."/>
            <person name="Torrents D."/>
            <person name="von Mering C."/>
            <person name="Zdobnov E.M."/>
            <person name="Makova K."/>
            <person name="Nekrutenko A."/>
            <person name="Elnitski L."/>
            <person name="Eswara P."/>
            <person name="King D.C."/>
            <person name="Yang S.-P."/>
            <person name="Tyekucheva S."/>
            <person name="Radakrishnan A."/>
            <person name="Harris R.S."/>
            <person name="Chiaromonte F."/>
            <person name="Taylor J."/>
            <person name="He J."/>
            <person name="Rijnkels M."/>
            <person name="Griffiths-Jones S."/>
            <person name="Ureta-Vidal A."/>
            <person name="Hoffman M.M."/>
            <person name="Severin J."/>
            <person name="Searle S.M.J."/>
            <person name="Law A.S."/>
            <person name="Speed D."/>
            <person name="Waddington D."/>
            <person name="Cheng Z."/>
            <person name="Tuzun E."/>
            <person name="Eichler E."/>
            <person name="Bao Z."/>
            <person name="Flicek P."/>
            <person name="Shteynberg D.D."/>
            <person name="Brent M.R."/>
            <person name="Bye J.M."/>
            <person name="Huckle E.J."/>
            <person name="Chatterji S."/>
            <person name="Dewey C."/>
            <person name="Pachter L."/>
            <person name="Kouranov A."/>
            <person name="Mourelatos Z."/>
            <person name="Hatzigeorgiou A.G."/>
            <person name="Paterson A.H."/>
            <person name="Ivarie R."/>
            <person name="Brandstrom M."/>
            <person name="Axelsson E."/>
            <person name="Backstrom N."/>
            <person name="Berlin S."/>
            <person name="Webster M.T."/>
            <person name="Pourquie O."/>
            <person name="Reymond A."/>
            <person name="Ucla C."/>
            <person name="Antonarakis S.E."/>
            <person name="Long M."/>
            <person name="Emerson J.J."/>
            <person name="Betran E."/>
            <person name="Dupanloup I."/>
            <person name="Kaessmann H."/>
            <person name="Hinrichs A.S."/>
            <person name="Bejerano G."/>
            <person name="Furey T.S."/>
            <person name="Harte R.A."/>
            <person name="Raney B."/>
            <person name="Siepel A."/>
            <person name="Kent W.J."/>
            <person name="Haussler D."/>
            <person name="Eyras E."/>
            <person name="Castelo R."/>
            <person name="Abril J.F."/>
            <person name="Castellano S."/>
            <person name="Camara F."/>
            <person name="Parra G."/>
            <person name="Guigo R."/>
            <person name="Bourque G."/>
            <person name="Tesler G."/>
            <person name="Pevzner P.A."/>
            <person name="Smit A."/>
            <person name="Fulton L.A."/>
            <person name="Mardis E.R."/>
            <person name="Wilson R.K."/>
        </authorList>
    </citation>
    <scope>NUCLEOTIDE SEQUENCE [LARGE SCALE GENOMIC DNA]</scope>
    <source>
        <strain>Red jungle fowl</strain>
    </source>
</reference>
<reference key="2">
    <citation type="journal article" date="1981" name="FEBS Lett.">
        <title>Amino acid sequences of the cardiac L-2A, L-2B and gizzard 17 000-Mr light chains of chicken muscle myosin.</title>
        <authorList>
            <person name="Matsuda G."/>
            <person name="Maita T."/>
            <person name="Kato Y."/>
            <person name="Chen J."/>
            <person name="Umegane T."/>
        </authorList>
    </citation>
    <scope>PROTEIN SEQUENCE OF 3-165</scope>
</reference>
<proteinExistence type="evidence at protein level"/>
<protein>
    <recommendedName>
        <fullName>Myosin regulatory light chain 2B, cardiac muscle isoform</fullName>
        <shortName>G2</shortName>
        <shortName>MLC-2B</shortName>
    </recommendedName>
</protein>
<feature type="initiator methionine" description="Removed">
    <location>
        <position position="1"/>
    </location>
</feature>
<feature type="chain" id="PRO_0000198730" description="Myosin regulatory light chain 2B, cardiac muscle isoform">
    <location>
        <begin position="2"/>
        <end position="165"/>
    </location>
</feature>
<feature type="domain" description="EF-hand 1" evidence="2">
    <location>
        <begin position="23"/>
        <end position="58"/>
    </location>
</feature>
<feature type="domain" description="EF-hand 2" evidence="2">
    <location>
        <begin position="93"/>
        <end position="128"/>
    </location>
</feature>
<feature type="domain" description="EF-hand 3" evidence="2">
    <location>
        <begin position="129"/>
        <end position="164"/>
    </location>
</feature>
<feature type="binding site" evidence="2">
    <location>
        <position position="36"/>
    </location>
    <ligand>
        <name>Ca(2+)</name>
        <dbReference type="ChEBI" id="CHEBI:29108"/>
    </ligand>
</feature>
<feature type="binding site" evidence="2">
    <location>
        <position position="38"/>
    </location>
    <ligand>
        <name>Ca(2+)</name>
        <dbReference type="ChEBI" id="CHEBI:29108"/>
    </ligand>
</feature>
<feature type="binding site" evidence="2">
    <location>
        <position position="40"/>
    </location>
    <ligand>
        <name>Ca(2+)</name>
        <dbReference type="ChEBI" id="CHEBI:29108"/>
    </ligand>
</feature>
<feature type="binding site" evidence="2">
    <location>
        <position position="47"/>
    </location>
    <ligand>
        <name>Ca(2+)</name>
        <dbReference type="ChEBI" id="CHEBI:29108"/>
    </ligand>
</feature>
<feature type="modified residue" description="N,N,N-trimethylalanine" evidence="1">
    <location>
        <position position="2"/>
    </location>
</feature>
<name>MLRB_CHICK</name>
<comment type="subunit">
    <text>Myosin is a hexamer of 2 heavy chains and 4 light chains.</text>
</comment>
<comment type="PTM">
    <text>The N-terminus is blocked. N,N,N-trimethylalanine, found in other myosin light chains would not have been detected in the N-terminal tryptic peptide in PubMed:7319048 because it would remain trimethylated and ninhydrin negative after hydrolysis.</text>
</comment>
<comment type="miscellaneous">
    <text>This chain binds calcium.</text>
</comment>
<organism>
    <name type="scientific">Gallus gallus</name>
    <name type="common">Chicken</name>
    <dbReference type="NCBI Taxonomy" id="9031"/>
    <lineage>
        <taxon>Eukaryota</taxon>
        <taxon>Metazoa</taxon>
        <taxon>Chordata</taxon>
        <taxon>Craniata</taxon>
        <taxon>Vertebrata</taxon>
        <taxon>Euteleostomi</taxon>
        <taxon>Archelosauria</taxon>
        <taxon>Archosauria</taxon>
        <taxon>Dinosauria</taxon>
        <taxon>Saurischia</taxon>
        <taxon>Theropoda</taxon>
        <taxon>Coelurosauria</taxon>
        <taxon>Aves</taxon>
        <taxon>Neognathae</taxon>
        <taxon>Galloanserae</taxon>
        <taxon>Galliformes</taxon>
        <taxon>Phasianidae</taxon>
        <taxon>Phasianinae</taxon>
        <taxon>Gallus</taxon>
    </lineage>
</organism>
<evidence type="ECO:0000250" key="1">
    <source>
        <dbReference type="UniProtKB" id="P02608"/>
    </source>
</evidence>
<evidence type="ECO:0000255" key="2">
    <source>
        <dbReference type="PROSITE-ProRule" id="PRU00448"/>
    </source>
</evidence>